<protein>
    <recommendedName>
        <fullName evidence="1">Large ribosomal subunit protein bL34</fullName>
    </recommendedName>
    <alternativeName>
        <fullName evidence="3">50S ribosomal protein L34</fullName>
    </alternativeName>
</protein>
<accession>B8H1F0</accession>
<keyword id="KW-1185">Reference proteome</keyword>
<keyword id="KW-0687">Ribonucleoprotein</keyword>
<keyword id="KW-0689">Ribosomal protein</keyword>
<comment type="similarity">
    <text evidence="1">Belongs to the bacterial ribosomal protein bL34 family.</text>
</comment>
<gene>
    <name evidence="1" type="primary">rpmH</name>
    <name type="ordered locus">CCNA_00808</name>
</gene>
<feature type="chain" id="PRO_1000134433" description="Large ribosomal subunit protein bL34">
    <location>
        <begin position="1"/>
        <end position="44"/>
    </location>
</feature>
<feature type="region of interest" description="Disordered" evidence="2">
    <location>
        <begin position="24"/>
        <end position="44"/>
    </location>
</feature>
<feature type="compositionally biased region" description="Basic residues" evidence="2">
    <location>
        <begin position="31"/>
        <end position="44"/>
    </location>
</feature>
<name>RL34_CAUVN</name>
<evidence type="ECO:0000255" key="1">
    <source>
        <dbReference type="HAMAP-Rule" id="MF_00391"/>
    </source>
</evidence>
<evidence type="ECO:0000256" key="2">
    <source>
        <dbReference type="SAM" id="MobiDB-lite"/>
    </source>
</evidence>
<evidence type="ECO:0000305" key="3"/>
<dbReference type="EMBL" id="CP001340">
    <property type="protein sequence ID" value="ACL94273.1"/>
    <property type="molecule type" value="Genomic_DNA"/>
</dbReference>
<dbReference type="RefSeq" id="WP_004622337.1">
    <property type="nucleotide sequence ID" value="NC_011916.1"/>
</dbReference>
<dbReference type="RefSeq" id="YP_002516181.1">
    <property type="nucleotide sequence ID" value="NC_011916.1"/>
</dbReference>
<dbReference type="SMR" id="B8H1F0"/>
<dbReference type="GeneID" id="7329844"/>
<dbReference type="KEGG" id="ccs:CCNA_00808"/>
<dbReference type="PATRIC" id="fig|565050.3.peg.797"/>
<dbReference type="HOGENOM" id="CLU_129938_2_0_5"/>
<dbReference type="PhylomeDB" id="B8H1F0"/>
<dbReference type="Proteomes" id="UP000001364">
    <property type="component" value="Chromosome"/>
</dbReference>
<dbReference type="GO" id="GO:1990904">
    <property type="term" value="C:ribonucleoprotein complex"/>
    <property type="evidence" value="ECO:0007669"/>
    <property type="project" value="UniProtKB-KW"/>
</dbReference>
<dbReference type="GO" id="GO:0005840">
    <property type="term" value="C:ribosome"/>
    <property type="evidence" value="ECO:0007669"/>
    <property type="project" value="UniProtKB-KW"/>
</dbReference>
<dbReference type="GO" id="GO:0003735">
    <property type="term" value="F:structural constituent of ribosome"/>
    <property type="evidence" value="ECO:0007669"/>
    <property type="project" value="InterPro"/>
</dbReference>
<dbReference type="GO" id="GO:0006412">
    <property type="term" value="P:translation"/>
    <property type="evidence" value="ECO:0007669"/>
    <property type="project" value="UniProtKB-UniRule"/>
</dbReference>
<dbReference type="FunFam" id="1.10.287.3980:FF:000001">
    <property type="entry name" value="Mitochondrial ribosomal protein L34"/>
    <property type="match status" value="1"/>
</dbReference>
<dbReference type="Gene3D" id="1.10.287.3980">
    <property type="match status" value="1"/>
</dbReference>
<dbReference type="HAMAP" id="MF_00391">
    <property type="entry name" value="Ribosomal_bL34"/>
    <property type="match status" value="1"/>
</dbReference>
<dbReference type="InterPro" id="IPR000271">
    <property type="entry name" value="Ribosomal_bL34"/>
</dbReference>
<dbReference type="NCBIfam" id="TIGR01030">
    <property type="entry name" value="rpmH_bact"/>
    <property type="match status" value="1"/>
</dbReference>
<dbReference type="PANTHER" id="PTHR14503:SF4">
    <property type="entry name" value="LARGE RIBOSOMAL SUBUNIT PROTEIN BL34M"/>
    <property type="match status" value="1"/>
</dbReference>
<dbReference type="PANTHER" id="PTHR14503">
    <property type="entry name" value="MITOCHONDRIAL RIBOSOMAL PROTEIN 34 FAMILY MEMBER"/>
    <property type="match status" value="1"/>
</dbReference>
<dbReference type="Pfam" id="PF00468">
    <property type="entry name" value="Ribosomal_L34"/>
    <property type="match status" value="1"/>
</dbReference>
<reference key="1">
    <citation type="journal article" date="2010" name="J. Bacteriol.">
        <title>The genetic basis of laboratory adaptation in Caulobacter crescentus.</title>
        <authorList>
            <person name="Marks M.E."/>
            <person name="Castro-Rojas C.M."/>
            <person name="Teiling C."/>
            <person name="Du L."/>
            <person name="Kapatral V."/>
            <person name="Walunas T.L."/>
            <person name="Crosson S."/>
        </authorList>
    </citation>
    <scope>NUCLEOTIDE SEQUENCE [LARGE SCALE GENOMIC DNA]</scope>
    <source>
        <strain>NA1000 / CB15N</strain>
    </source>
</reference>
<sequence>MKRTFQPSKLVRARRHGYRARMATKNGQKVVARRRAKGRKRLTA</sequence>
<proteinExistence type="inferred from homology"/>
<organism>
    <name type="scientific">Caulobacter vibrioides (strain NA1000 / CB15N)</name>
    <name type="common">Caulobacter crescentus</name>
    <dbReference type="NCBI Taxonomy" id="565050"/>
    <lineage>
        <taxon>Bacteria</taxon>
        <taxon>Pseudomonadati</taxon>
        <taxon>Pseudomonadota</taxon>
        <taxon>Alphaproteobacteria</taxon>
        <taxon>Caulobacterales</taxon>
        <taxon>Caulobacteraceae</taxon>
        <taxon>Caulobacter</taxon>
    </lineage>
</organism>